<organism>
    <name type="scientific">Synechococcus sp. (strain RCC307)</name>
    <dbReference type="NCBI Taxonomy" id="316278"/>
    <lineage>
        <taxon>Bacteria</taxon>
        <taxon>Bacillati</taxon>
        <taxon>Cyanobacteriota</taxon>
        <taxon>Cyanophyceae</taxon>
        <taxon>Synechococcales</taxon>
        <taxon>Synechococcaceae</taxon>
        <taxon>Synechococcus</taxon>
    </lineage>
</organism>
<sequence>MLPLPRRQQQVLQATVQHYVDTVEPVGSRTLVRRFGLDASPATVRSAMGALEQKGLLTQPHTSAGRVPSPKGYRQFVDALLPEPGAAVVQLQRELAELSLQWAALDDLLHHLARRLADLTGLMSIITRPQRQEPRLKALRLVRSGDRLLVFLVESSAASSSLNLRLPPDSSAQLQALEHWLNDQLSKSAINWSGLPSHLQSVGAPLKQALASHNRGRNRQAEGALTTGLAGLLCQPEFQLTTSLRPLLQLVEQQPHELLNPAAATASGGVWIGQEHPHPALSGCAVVQAPYATASGGEGSVALVGPMRMAYATALAAVEAVAGTLSRLLA</sequence>
<evidence type="ECO:0000255" key="1">
    <source>
        <dbReference type="HAMAP-Rule" id="MF_00081"/>
    </source>
</evidence>
<feature type="chain" id="PRO_1000010472" description="Heat-inducible transcription repressor HrcA">
    <location>
        <begin position="1"/>
        <end position="330"/>
    </location>
</feature>
<name>HRCA_SYNR3</name>
<comment type="function">
    <text evidence="1">Negative regulator of class I heat shock genes (grpE-dnaK-dnaJ and groELS operons). Prevents heat-shock induction of these operons.</text>
</comment>
<comment type="similarity">
    <text evidence="1">Belongs to the HrcA family.</text>
</comment>
<dbReference type="EMBL" id="CT978603">
    <property type="protein sequence ID" value="CAK29175.1"/>
    <property type="molecule type" value="Genomic_DNA"/>
</dbReference>
<dbReference type="SMR" id="A5GWB6"/>
<dbReference type="STRING" id="316278.SynRCC307_2272"/>
<dbReference type="KEGG" id="syr:SynRCC307_2272"/>
<dbReference type="eggNOG" id="COG1420">
    <property type="taxonomic scope" value="Bacteria"/>
</dbReference>
<dbReference type="HOGENOM" id="CLU_050019_1_0_3"/>
<dbReference type="OrthoDB" id="9783139at2"/>
<dbReference type="Proteomes" id="UP000001115">
    <property type="component" value="Chromosome"/>
</dbReference>
<dbReference type="GO" id="GO:0003677">
    <property type="term" value="F:DNA binding"/>
    <property type="evidence" value="ECO:0007669"/>
    <property type="project" value="InterPro"/>
</dbReference>
<dbReference type="GO" id="GO:0045892">
    <property type="term" value="P:negative regulation of DNA-templated transcription"/>
    <property type="evidence" value="ECO:0007669"/>
    <property type="project" value="UniProtKB-UniRule"/>
</dbReference>
<dbReference type="Gene3D" id="3.30.450.40">
    <property type="match status" value="1"/>
</dbReference>
<dbReference type="Gene3D" id="3.30.390.60">
    <property type="entry name" value="Heat-inducible transcription repressor hrca homolog, domain 3"/>
    <property type="match status" value="1"/>
</dbReference>
<dbReference type="Gene3D" id="1.10.10.10">
    <property type="entry name" value="Winged helix-like DNA-binding domain superfamily/Winged helix DNA-binding domain"/>
    <property type="match status" value="1"/>
</dbReference>
<dbReference type="HAMAP" id="MF_00081">
    <property type="entry name" value="HrcA"/>
    <property type="match status" value="1"/>
</dbReference>
<dbReference type="InterPro" id="IPR029016">
    <property type="entry name" value="GAF-like_dom_sf"/>
</dbReference>
<dbReference type="InterPro" id="IPR002571">
    <property type="entry name" value="HrcA"/>
</dbReference>
<dbReference type="InterPro" id="IPR021153">
    <property type="entry name" value="HrcA_C"/>
</dbReference>
<dbReference type="InterPro" id="IPR036388">
    <property type="entry name" value="WH-like_DNA-bd_sf"/>
</dbReference>
<dbReference type="InterPro" id="IPR036390">
    <property type="entry name" value="WH_DNA-bd_sf"/>
</dbReference>
<dbReference type="InterPro" id="IPR023120">
    <property type="entry name" value="WHTH_transcript_rep_HrcA_IDD"/>
</dbReference>
<dbReference type="PANTHER" id="PTHR34824">
    <property type="entry name" value="HEAT-INDUCIBLE TRANSCRIPTION REPRESSOR HRCA"/>
    <property type="match status" value="1"/>
</dbReference>
<dbReference type="PANTHER" id="PTHR34824:SF1">
    <property type="entry name" value="HEAT-INDUCIBLE TRANSCRIPTION REPRESSOR HRCA"/>
    <property type="match status" value="1"/>
</dbReference>
<dbReference type="Pfam" id="PF01628">
    <property type="entry name" value="HrcA"/>
    <property type="match status" value="1"/>
</dbReference>
<dbReference type="PIRSF" id="PIRSF005485">
    <property type="entry name" value="HrcA"/>
    <property type="match status" value="1"/>
</dbReference>
<dbReference type="SUPFAM" id="SSF55781">
    <property type="entry name" value="GAF domain-like"/>
    <property type="match status" value="1"/>
</dbReference>
<dbReference type="SUPFAM" id="SSF46785">
    <property type="entry name" value="Winged helix' DNA-binding domain"/>
    <property type="match status" value="1"/>
</dbReference>
<keyword id="KW-1185">Reference proteome</keyword>
<keyword id="KW-0678">Repressor</keyword>
<keyword id="KW-0346">Stress response</keyword>
<keyword id="KW-0804">Transcription</keyword>
<keyword id="KW-0805">Transcription regulation</keyword>
<protein>
    <recommendedName>
        <fullName evidence="1">Heat-inducible transcription repressor HrcA</fullName>
    </recommendedName>
</protein>
<accession>A5GWB6</accession>
<gene>
    <name evidence="1" type="primary">hrcA</name>
    <name type="ordered locus">SynRCC307_2272</name>
</gene>
<proteinExistence type="inferred from homology"/>
<reference key="1">
    <citation type="submission" date="2006-05" db="EMBL/GenBank/DDBJ databases">
        <authorList>
            <consortium name="Genoscope"/>
        </authorList>
    </citation>
    <scope>NUCLEOTIDE SEQUENCE [LARGE SCALE GENOMIC DNA]</scope>
    <source>
        <strain>RCC307</strain>
    </source>
</reference>